<accession>Q58678</accession>
<organism>
    <name type="scientific">Methanocaldococcus jannaschii (strain ATCC 43067 / DSM 2661 / JAL-1 / JCM 10045 / NBRC 100440)</name>
    <name type="common">Methanococcus jannaschii</name>
    <dbReference type="NCBI Taxonomy" id="243232"/>
    <lineage>
        <taxon>Archaea</taxon>
        <taxon>Methanobacteriati</taxon>
        <taxon>Methanobacteriota</taxon>
        <taxon>Methanomada group</taxon>
        <taxon>Methanococci</taxon>
        <taxon>Methanococcales</taxon>
        <taxon>Methanocaldococcaceae</taxon>
        <taxon>Methanocaldococcus</taxon>
    </lineage>
</organism>
<proteinExistence type="inferred from homology"/>
<name>Y1282_METJA</name>
<sequence>MRKIILIFFIFLILQNIYAYEKIYDVNHVCYYTLTSVELQKFVKTAEIITPLNADNKTTITKDTILVGNPEENPLTKKYIGFFKIKINKTFPGKNKGIIEKQIINGHTVILLAGSDIQGTYASIITFANLNDIPENPIICETSNKVNIYSTSLNSEYFRDFIEKNILTPKEIEKVKSLSYKLKGKDKKATIENIAKWVANNIKYDYDKCKKIESGKFSWDEYNTPSETVKTKKGVCLDYATLTSALLLNDNIIPYMLDVALYNTSSLKISSYHASVAVKIDNTYFVIDQQPYLIPINEYTAQTFEDNLRIASIVMFRVVKERDGIKLIKEKEVPGIAIYGDLINLLEMRFNN</sequence>
<dbReference type="EMBL" id="L77117">
    <property type="protein sequence ID" value="AAB99291.1"/>
    <property type="molecule type" value="Genomic_DNA"/>
</dbReference>
<dbReference type="PIR" id="A64460">
    <property type="entry name" value="A64460"/>
</dbReference>
<dbReference type="RefSeq" id="WP_010870795.1">
    <property type="nucleotide sequence ID" value="NC_000909.1"/>
</dbReference>
<dbReference type="SMR" id="Q58678"/>
<dbReference type="PaxDb" id="243232-MJ_1282"/>
<dbReference type="DNASU" id="1452180"/>
<dbReference type="EnsemblBacteria" id="AAB99291">
    <property type="protein sequence ID" value="AAB99291"/>
    <property type="gene ID" value="MJ_1282"/>
</dbReference>
<dbReference type="GeneID" id="1452180"/>
<dbReference type="KEGG" id="mja:MJ_1282"/>
<dbReference type="eggNOG" id="arCOG02164">
    <property type="taxonomic scope" value="Archaea"/>
</dbReference>
<dbReference type="HOGENOM" id="CLU_786686_0_0_2"/>
<dbReference type="InParanoid" id="Q58678"/>
<dbReference type="OrthoDB" id="62381at2157"/>
<dbReference type="Proteomes" id="UP000000805">
    <property type="component" value="Chromosome"/>
</dbReference>
<dbReference type="Gene3D" id="3.10.620.30">
    <property type="match status" value="1"/>
</dbReference>
<dbReference type="InterPro" id="IPR038765">
    <property type="entry name" value="Papain-like_cys_pep_sf"/>
</dbReference>
<dbReference type="InterPro" id="IPR022651">
    <property type="entry name" value="S_layer_C"/>
</dbReference>
<dbReference type="InterPro" id="IPR007562">
    <property type="entry name" value="Transglutaminase-like_domain"/>
</dbReference>
<dbReference type="Pfam" id="PF04473">
    <property type="entry name" value="DUF553"/>
    <property type="match status" value="1"/>
</dbReference>
<dbReference type="Pfam" id="PF05124">
    <property type="entry name" value="S_layer_C"/>
    <property type="match status" value="1"/>
</dbReference>
<dbReference type="SUPFAM" id="SSF54001">
    <property type="entry name" value="Cysteine proteinases"/>
    <property type="match status" value="1"/>
</dbReference>
<protein>
    <recommendedName>
        <fullName>UPF0252 protein MJ1282</fullName>
    </recommendedName>
</protein>
<keyword id="KW-1185">Reference proteome</keyword>
<feature type="chain" id="PRO_0000159555" description="UPF0252 protein MJ1282">
    <location>
        <begin position="1"/>
        <end position="352"/>
    </location>
</feature>
<reference key="1">
    <citation type="journal article" date="1996" name="Science">
        <title>Complete genome sequence of the methanogenic archaeon, Methanococcus jannaschii.</title>
        <authorList>
            <person name="Bult C.J."/>
            <person name="White O."/>
            <person name="Olsen G.J."/>
            <person name="Zhou L."/>
            <person name="Fleischmann R.D."/>
            <person name="Sutton G.G."/>
            <person name="Blake J.A."/>
            <person name="FitzGerald L.M."/>
            <person name="Clayton R.A."/>
            <person name="Gocayne J.D."/>
            <person name="Kerlavage A.R."/>
            <person name="Dougherty B.A."/>
            <person name="Tomb J.-F."/>
            <person name="Adams M.D."/>
            <person name="Reich C.I."/>
            <person name="Overbeek R."/>
            <person name="Kirkness E.F."/>
            <person name="Weinstock K.G."/>
            <person name="Merrick J.M."/>
            <person name="Glodek A."/>
            <person name="Scott J.L."/>
            <person name="Geoghagen N.S.M."/>
            <person name="Weidman J.F."/>
            <person name="Fuhrmann J.L."/>
            <person name="Nguyen D."/>
            <person name="Utterback T.R."/>
            <person name="Kelley J.M."/>
            <person name="Peterson J.D."/>
            <person name="Sadow P.W."/>
            <person name="Hanna M.C."/>
            <person name="Cotton M.D."/>
            <person name="Roberts K.M."/>
            <person name="Hurst M.A."/>
            <person name="Kaine B.P."/>
            <person name="Borodovsky M."/>
            <person name="Klenk H.-P."/>
            <person name="Fraser C.M."/>
            <person name="Smith H.O."/>
            <person name="Woese C.R."/>
            <person name="Venter J.C."/>
        </authorList>
    </citation>
    <scope>NUCLEOTIDE SEQUENCE [LARGE SCALE GENOMIC DNA]</scope>
    <source>
        <strain>ATCC 43067 / DSM 2661 / JAL-1 / JCM 10045 / NBRC 100440</strain>
    </source>
</reference>
<comment type="similarity">
    <text evidence="1">Belongs to the UPF0252 family.</text>
</comment>
<evidence type="ECO:0000305" key="1"/>
<gene>
    <name type="ordered locus">MJ1282</name>
</gene>